<protein>
    <recommendedName>
        <fullName evidence="3">8-amino-7-oxononanoate synthase</fullName>
        <shortName evidence="3">AONS</shortName>
        <ecNumber evidence="5">2.3.1.47</ecNumber>
    </recommendedName>
    <alternativeName>
        <fullName evidence="3">7-keto-8-amino-pelargonic acid synthase</fullName>
        <shortName evidence="3">7-KAP synthase</shortName>
        <shortName evidence="3">KAPA synthase</shortName>
    </alternativeName>
    <alternativeName>
        <fullName evidence="3">8-amino-7-ketopelargonate synthase</fullName>
    </alternativeName>
</protein>
<reference key="1">
    <citation type="journal article" date="2005" name="Nature">
        <title>Sequencing of Aspergillus nidulans and comparative analysis with A. fumigatus and A. oryzae.</title>
        <authorList>
            <person name="Galagan J.E."/>
            <person name="Calvo S.E."/>
            <person name="Cuomo C."/>
            <person name="Ma L.-J."/>
            <person name="Wortman J.R."/>
            <person name="Batzoglou S."/>
            <person name="Lee S.-I."/>
            <person name="Bastuerkmen M."/>
            <person name="Spevak C.C."/>
            <person name="Clutterbuck J."/>
            <person name="Kapitonov V."/>
            <person name="Jurka J."/>
            <person name="Scazzocchio C."/>
            <person name="Farman M.L."/>
            <person name="Butler J."/>
            <person name="Purcell S."/>
            <person name="Harris S."/>
            <person name="Braus G.H."/>
            <person name="Draht O."/>
            <person name="Busch S."/>
            <person name="D'Enfert C."/>
            <person name="Bouchier C."/>
            <person name="Goldman G.H."/>
            <person name="Bell-Pedersen D."/>
            <person name="Griffiths-Jones S."/>
            <person name="Doonan J.H."/>
            <person name="Yu J."/>
            <person name="Vienken K."/>
            <person name="Pain A."/>
            <person name="Freitag M."/>
            <person name="Selker E.U."/>
            <person name="Archer D.B."/>
            <person name="Penalva M.A."/>
            <person name="Oakley B.R."/>
            <person name="Momany M."/>
            <person name="Tanaka T."/>
            <person name="Kumagai T."/>
            <person name="Asai K."/>
            <person name="Machida M."/>
            <person name="Nierman W.C."/>
            <person name="Denning D.W."/>
            <person name="Caddick M.X."/>
            <person name="Hynes M."/>
            <person name="Paoletti M."/>
            <person name="Fischer R."/>
            <person name="Miller B.L."/>
            <person name="Dyer P.S."/>
            <person name="Sachs M.S."/>
            <person name="Osmani S.A."/>
            <person name="Birren B.W."/>
        </authorList>
    </citation>
    <scope>NUCLEOTIDE SEQUENCE [LARGE SCALE GENOMIC DNA]</scope>
    <source>
        <strain>FGSC A4 / ATCC 38163 / CBS 112.46 / NRRL 194 / M139</strain>
    </source>
</reference>
<reference key="2">
    <citation type="journal article" date="2009" name="Fungal Genet. Biol.">
        <title>The 2008 update of the Aspergillus nidulans genome annotation: a community effort.</title>
        <authorList>
            <person name="Wortman J.R."/>
            <person name="Gilsenan J.M."/>
            <person name="Joardar V."/>
            <person name="Deegan J."/>
            <person name="Clutterbuck J."/>
            <person name="Andersen M.R."/>
            <person name="Archer D."/>
            <person name="Bencina M."/>
            <person name="Braus G."/>
            <person name="Coutinho P."/>
            <person name="von Dohren H."/>
            <person name="Doonan J."/>
            <person name="Driessen A.J."/>
            <person name="Durek P."/>
            <person name="Espeso E."/>
            <person name="Fekete E."/>
            <person name="Flipphi M."/>
            <person name="Estrada C.G."/>
            <person name="Geysens S."/>
            <person name="Goldman G."/>
            <person name="de Groot P.W."/>
            <person name="Hansen K."/>
            <person name="Harris S.D."/>
            <person name="Heinekamp T."/>
            <person name="Helmstaedt K."/>
            <person name="Henrissat B."/>
            <person name="Hofmann G."/>
            <person name="Homan T."/>
            <person name="Horio T."/>
            <person name="Horiuchi H."/>
            <person name="James S."/>
            <person name="Jones M."/>
            <person name="Karaffa L."/>
            <person name="Karanyi Z."/>
            <person name="Kato M."/>
            <person name="Keller N."/>
            <person name="Kelly D.E."/>
            <person name="Kiel J.A."/>
            <person name="Kim J.M."/>
            <person name="van der Klei I.J."/>
            <person name="Klis F.M."/>
            <person name="Kovalchuk A."/>
            <person name="Krasevec N."/>
            <person name="Kubicek C.P."/>
            <person name="Liu B."/>
            <person name="Maccabe A."/>
            <person name="Meyer V."/>
            <person name="Mirabito P."/>
            <person name="Miskei M."/>
            <person name="Mos M."/>
            <person name="Mullins J."/>
            <person name="Nelson D.R."/>
            <person name="Nielsen J."/>
            <person name="Oakley B.R."/>
            <person name="Osmani S.A."/>
            <person name="Pakula T."/>
            <person name="Paszewski A."/>
            <person name="Paulsen I."/>
            <person name="Pilsyk S."/>
            <person name="Pocsi I."/>
            <person name="Punt P.J."/>
            <person name="Ram A.F."/>
            <person name="Ren Q."/>
            <person name="Robellet X."/>
            <person name="Robson G."/>
            <person name="Seiboth B."/>
            <person name="van Solingen P."/>
            <person name="Specht T."/>
            <person name="Sun J."/>
            <person name="Taheri-Talesh N."/>
            <person name="Takeshita N."/>
            <person name="Ussery D."/>
            <person name="vanKuyk P.A."/>
            <person name="Visser H."/>
            <person name="van de Vondervoort P.J."/>
            <person name="de Vries R.P."/>
            <person name="Walton J."/>
            <person name="Xiang X."/>
            <person name="Xiong Y."/>
            <person name="Zeng A.P."/>
            <person name="Brandt B.W."/>
            <person name="Cornell M.J."/>
            <person name="van den Hondel C.A."/>
            <person name="Visser J."/>
            <person name="Oliver S.G."/>
            <person name="Turner G."/>
        </authorList>
    </citation>
    <scope>GENOME REANNOTATION</scope>
    <source>
        <strain>FGSC A4 / ATCC 38163 / CBS 112.46 / NRRL 194 / M139</strain>
    </source>
</reference>
<reference key="3">
    <citation type="journal article" date="2011" name="Fungal Genet. Biol.">
        <title>Characterization of the Aspergillus nidulans biotin biosynthetic gene cluster and use of the bioDA gene as a new transformation marker.</title>
        <authorList>
            <person name="Magliano P."/>
            <person name="Flipphi M."/>
            <person name="Sanglard D."/>
            <person name="Poirier Y."/>
        </authorList>
    </citation>
    <scope>FUNCTION</scope>
    <scope>INDUCTION</scope>
    <scope>PATHWAY</scope>
</reference>
<keyword id="KW-0093">Biotin biosynthesis</keyword>
<keyword id="KW-0663">Pyridoxal phosphate</keyword>
<keyword id="KW-1185">Reference proteome</keyword>
<keyword id="KW-0808">Transferase</keyword>
<comment type="function">
    <text evidence="1 2">8-amino-7-oxononanoate synthase; part of the cluster involved in the biosynthesis of biotin (also known as vitamin B8 or vitamin H), a water-soluble vitamin that functions as a prosthetic group of many carboxylases, such as acetyl-CoA carboxylase and pyruvate carboxylase (PubMed:20713166). Catalyzes the decarboxylative condensation of pimeloyl-[acyl-carrier protein] and L-alanine to produce 8-amino-7-oxononanoate (AON) (By similarity).</text>
</comment>
<comment type="catalytic activity">
    <reaction evidence="5">
        <text>6-carboxyhexanoyl-[ACP] + L-alanine + H(+) = (8S)-8-amino-7-oxononanoate + holo-[ACP] + CO2</text>
        <dbReference type="Rhea" id="RHEA:42288"/>
        <dbReference type="Rhea" id="RHEA-COMP:9685"/>
        <dbReference type="Rhea" id="RHEA-COMP:9955"/>
        <dbReference type="ChEBI" id="CHEBI:15378"/>
        <dbReference type="ChEBI" id="CHEBI:16526"/>
        <dbReference type="ChEBI" id="CHEBI:57972"/>
        <dbReference type="ChEBI" id="CHEBI:64479"/>
        <dbReference type="ChEBI" id="CHEBI:78846"/>
        <dbReference type="ChEBI" id="CHEBI:149468"/>
        <dbReference type="EC" id="2.3.1.47"/>
    </reaction>
</comment>
<comment type="cofactor">
    <cofactor evidence="1">
        <name>pyridoxal 5'-phosphate</name>
        <dbReference type="ChEBI" id="CHEBI:597326"/>
    </cofactor>
</comment>
<comment type="pathway">
    <text evidence="2">Cofactor biosynthesis; biotin biosynthesis.</text>
</comment>
<comment type="subunit">
    <text evidence="1">Homodimer.</text>
</comment>
<comment type="induction">
    <text evidence="2">Expression is increased when transferring biotin auxotrophic mutant mycelia from biotin-supplemented medium to biotin-deficient medium.</text>
</comment>
<comment type="similarity">
    <text evidence="4">Belongs to the class-II pyridoxal-phosphate-dependent aminotransferase family. BioF subfamily.</text>
</comment>
<accession>C8V1D1</accession>
<feature type="chain" id="PRO_0000449414" description="8-amino-7-oxononanoate synthase">
    <location>
        <begin position="1"/>
        <end position="412"/>
    </location>
</feature>
<feature type="binding site" evidence="1">
    <location>
        <begin position="106"/>
        <end position="107"/>
    </location>
    <ligand>
        <name>pyridoxal 5'-phosphate</name>
        <dbReference type="ChEBI" id="CHEBI:597326"/>
    </ligand>
</feature>
<feature type="binding site" evidence="1">
    <location>
        <position position="131"/>
    </location>
    <ligand>
        <name>substrate</name>
    </ligand>
</feature>
<feature type="binding site" evidence="1">
    <location>
        <position position="187"/>
    </location>
    <ligand>
        <name>pyridoxal 5'-phosphate</name>
        <dbReference type="ChEBI" id="CHEBI:597326"/>
    </ligand>
</feature>
<feature type="binding site" evidence="1">
    <location>
        <position position="219"/>
    </location>
    <ligand>
        <name>pyridoxal 5'-phosphate</name>
        <dbReference type="ChEBI" id="CHEBI:597326"/>
    </ligand>
</feature>
<feature type="binding site" evidence="1">
    <location>
        <position position="247"/>
    </location>
    <ligand>
        <name>pyridoxal 5'-phosphate</name>
        <dbReference type="ChEBI" id="CHEBI:597326"/>
    </ligand>
</feature>
<feature type="binding site" evidence="1">
    <location>
        <position position="370"/>
    </location>
    <ligand>
        <name>substrate</name>
    </ligand>
</feature>
<feature type="modified residue" description="N6-(pyridoxal phosphate)lysine" evidence="1">
    <location>
        <position position="250"/>
    </location>
</feature>
<gene>
    <name evidence="3" type="primary">bioF</name>
    <name type="ORF">ANIA_06645</name>
</gene>
<sequence length="412" mass="45580">MGDSPKCLRDSLREALRRREDKLCRRKLTILPSSSVDFSSNDFLSLSTSPAYRARFLDILQQAPPLHPFASGGSRLLDGNSAYAEELENFIAAFHNAPSGLLFNSGYDANVGVFSSIPQPGDLIVYDELIHASAHEGMRLSRAGKRIKFPHSSPDGLRAVLQAEITADPRLLQGRRNVFIAFESVYSMDGDVAPIREFVEIVDQLLPYGNGYFLVDEAHATGVFGPRGSGVVQELGLEDRMFVRVHTFGKALASHGAIVLCCADTRDYLINYARSLIYTTALGFPFLASIRAAYELLVEGKTEQLQHKLGQLIAHFRTGLDNLNHKDSSTFEVEHFTNSPIFSLRSSVPRVLASVCQEQGYTVRAIMPPTVPAGKERVRVCLHAGNTVEEVDGLLETIATWLQRMEKQKARL</sequence>
<dbReference type="EC" id="2.3.1.47" evidence="5"/>
<dbReference type="EMBL" id="BN001301">
    <property type="protein sequence ID" value="CBF71163.1"/>
    <property type="molecule type" value="Genomic_DNA"/>
</dbReference>
<dbReference type="RefSeq" id="XP_664249.1">
    <property type="nucleotide sequence ID" value="XM_659157.1"/>
</dbReference>
<dbReference type="SMR" id="C8V1D1"/>
<dbReference type="STRING" id="227321.C8V1D1"/>
<dbReference type="EnsemblFungi" id="CBF71163">
    <property type="protein sequence ID" value="CBF71163"/>
    <property type="gene ID" value="ANIA_06645"/>
</dbReference>
<dbReference type="GeneID" id="2870398"/>
<dbReference type="KEGG" id="ani:ANIA_06645"/>
<dbReference type="VEuPathDB" id="FungiDB:AN6645"/>
<dbReference type="eggNOG" id="KOG1360">
    <property type="taxonomic scope" value="Eukaryota"/>
</dbReference>
<dbReference type="HOGENOM" id="CLU_015846_3_0_1"/>
<dbReference type="InParanoid" id="C8V1D1"/>
<dbReference type="OMA" id="GTHEYCD"/>
<dbReference type="OrthoDB" id="2382073at2759"/>
<dbReference type="UniPathway" id="UPA00078"/>
<dbReference type="Proteomes" id="UP000000560">
    <property type="component" value="Chromosome I"/>
</dbReference>
<dbReference type="GO" id="GO:0005777">
    <property type="term" value="C:peroxisome"/>
    <property type="evidence" value="ECO:0000315"/>
    <property type="project" value="AspGD"/>
</dbReference>
<dbReference type="GO" id="GO:0008710">
    <property type="term" value="F:8-amino-7-oxononanoate synthase activity"/>
    <property type="evidence" value="ECO:0007669"/>
    <property type="project" value="UniProtKB-EC"/>
</dbReference>
<dbReference type="GO" id="GO:0030170">
    <property type="term" value="F:pyridoxal phosphate binding"/>
    <property type="evidence" value="ECO:0007669"/>
    <property type="project" value="InterPro"/>
</dbReference>
<dbReference type="GO" id="GO:0009102">
    <property type="term" value="P:biotin biosynthetic process"/>
    <property type="evidence" value="ECO:0000315"/>
    <property type="project" value="AspGD"/>
</dbReference>
<dbReference type="Gene3D" id="3.90.1150.10">
    <property type="entry name" value="Aspartate Aminotransferase, domain 1"/>
    <property type="match status" value="1"/>
</dbReference>
<dbReference type="Gene3D" id="3.40.640.10">
    <property type="entry name" value="Type I PLP-dependent aspartate aminotransferase-like (Major domain)"/>
    <property type="match status" value="1"/>
</dbReference>
<dbReference type="InterPro" id="IPR004839">
    <property type="entry name" value="Aminotransferase_I/II_large"/>
</dbReference>
<dbReference type="InterPro" id="IPR050087">
    <property type="entry name" value="AON_synthase_class-II"/>
</dbReference>
<dbReference type="InterPro" id="IPR015424">
    <property type="entry name" value="PyrdxlP-dep_Trfase"/>
</dbReference>
<dbReference type="InterPro" id="IPR015421">
    <property type="entry name" value="PyrdxlP-dep_Trfase_major"/>
</dbReference>
<dbReference type="InterPro" id="IPR015422">
    <property type="entry name" value="PyrdxlP-dep_Trfase_small"/>
</dbReference>
<dbReference type="PANTHER" id="PTHR13693:SF77">
    <property type="entry name" value="8-AMINO-7-OXONONANOATE SYNTHASE"/>
    <property type="match status" value="1"/>
</dbReference>
<dbReference type="PANTHER" id="PTHR13693">
    <property type="entry name" value="CLASS II AMINOTRANSFERASE/8-AMINO-7-OXONONANOATE SYNTHASE"/>
    <property type="match status" value="1"/>
</dbReference>
<dbReference type="Pfam" id="PF00155">
    <property type="entry name" value="Aminotran_1_2"/>
    <property type="match status" value="1"/>
</dbReference>
<dbReference type="SUPFAM" id="SSF53383">
    <property type="entry name" value="PLP-dependent transferases"/>
    <property type="match status" value="1"/>
</dbReference>
<evidence type="ECO:0000250" key="1">
    <source>
        <dbReference type="UniProtKB" id="B7LC58"/>
    </source>
</evidence>
<evidence type="ECO:0000269" key="2">
    <source>
    </source>
</evidence>
<evidence type="ECO:0000303" key="3">
    <source>
    </source>
</evidence>
<evidence type="ECO:0000305" key="4"/>
<evidence type="ECO:0000305" key="5">
    <source>
    </source>
</evidence>
<name>BIOF_EMENI</name>
<proteinExistence type="evidence at transcript level"/>
<organism>
    <name type="scientific">Emericella nidulans (strain FGSC A4 / ATCC 38163 / CBS 112.46 / NRRL 194 / M139)</name>
    <name type="common">Aspergillus nidulans</name>
    <dbReference type="NCBI Taxonomy" id="227321"/>
    <lineage>
        <taxon>Eukaryota</taxon>
        <taxon>Fungi</taxon>
        <taxon>Dikarya</taxon>
        <taxon>Ascomycota</taxon>
        <taxon>Pezizomycotina</taxon>
        <taxon>Eurotiomycetes</taxon>
        <taxon>Eurotiomycetidae</taxon>
        <taxon>Eurotiales</taxon>
        <taxon>Aspergillaceae</taxon>
        <taxon>Aspergillus</taxon>
        <taxon>Aspergillus subgen. Nidulantes</taxon>
    </lineage>
</organism>